<feature type="chain" id="PRO_0000113562" description="Serine hydroxymethyltransferase">
    <location>
        <begin position="1"/>
        <end position="415"/>
    </location>
</feature>
<feature type="binding site" evidence="1">
    <location>
        <position position="121"/>
    </location>
    <ligand>
        <name>(6S)-5,6,7,8-tetrahydrofolate</name>
        <dbReference type="ChEBI" id="CHEBI:57453"/>
    </ligand>
</feature>
<feature type="binding site" evidence="1">
    <location>
        <begin position="125"/>
        <end position="127"/>
    </location>
    <ligand>
        <name>(6S)-5,6,7,8-tetrahydrofolate</name>
        <dbReference type="ChEBI" id="CHEBI:57453"/>
    </ligand>
</feature>
<feature type="binding site" evidence="1">
    <location>
        <begin position="352"/>
        <end position="354"/>
    </location>
    <ligand>
        <name>(6S)-5,6,7,8-tetrahydrofolate</name>
        <dbReference type="ChEBI" id="CHEBI:57453"/>
    </ligand>
</feature>
<feature type="site" description="Plays an important role in substrate specificity" evidence="1">
    <location>
        <position position="228"/>
    </location>
</feature>
<feature type="modified residue" description="N6-(pyridoxal phosphate)lysine" evidence="1">
    <location>
        <position position="229"/>
    </location>
</feature>
<keyword id="KW-0028">Amino-acid biosynthesis</keyword>
<keyword id="KW-0963">Cytoplasm</keyword>
<keyword id="KW-0554">One-carbon metabolism</keyword>
<keyword id="KW-0663">Pyridoxal phosphate</keyword>
<keyword id="KW-1185">Reference proteome</keyword>
<keyword id="KW-0808">Transferase</keyword>
<reference key="1">
    <citation type="journal article" date="2003" name="Proc. Natl. Acad. Sci. U.S.A.">
        <title>The complete genome sequence of Chromobacterium violaceum reveals remarkable and exploitable bacterial adaptability.</title>
        <authorList>
            <person name="Vasconcelos A.T.R."/>
            <person name="de Almeida D.F."/>
            <person name="Hungria M."/>
            <person name="Guimaraes C.T."/>
            <person name="Antonio R.V."/>
            <person name="Almeida F.C."/>
            <person name="de Almeida L.G.P."/>
            <person name="de Almeida R."/>
            <person name="Alves-Gomes J.A."/>
            <person name="Andrade E.M."/>
            <person name="Araripe J."/>
            <person name="de Araujo M.F.F."/>
            <person name="Astolfi-Filho S."/>
            <person name="Azevedo V."/>
            <person name="Baptista A.J."/>
            <person name="Bataus L.A.M."/>
            <person name="Batista J.S."/>
            <person name="Belo A."/>
            <person name="van den Berg C."/>
            <person name="Bogo M."/>
            <person name="Bonatto S."/>
            <person name="Bordignon J."/>
            <person name="Brigido M.M."/>
            <person name="Brito C.A."/>
            <person name="Brocchi M."/>
            <person name="Burity H.A."/>
            <person name="Camargo A.A."/>
            <person name="Cardoso D.D.P."/>
            <person name="Carneiro N.P."/>
            <person name="Carraro D.M."/>
            <person name="Carvalho C.M.B."/>
            <person name="Cascardo J.C.M."/>
            <person name="Cavada B.S."/>
            <person name="Chueire L.M.O."/>
            <person name="Creczynski-Pasa T.B."/>
            <person name="Cunha-Junior N.C."/>
            <person name="Fagundes N."/>
            <person name="Falcao C.L."/>
            <person name="Fantinatti F."/>
            <person name="Farias I.P."/>
            <person name="Felipe M.S.S."/>
            <person name="Ferrari L.P."/>
            <person name="Ferro J.A."/>
            <person name="Ferro M.I.T."/>
            <person name="Franco G.R."/>
            <person name="Freitas N.S.A."/>
            <person name="Furlan L.R."/>
            <person name="Gazzinelli R.T."/>
            <person name="Gomes E.A."/>
            <person name="Goncalves P.R."/>
            <person name="Grangeiro T.B."/>
            <person name="Grattapaglia D."/>
            <person name="Grisard E.C."/>
            <person name="Hanna E.S."/>
            <person name="Jardim S.N."/>
            <person name="Laurino J."/>
            <person name="Leoi L.C.T."/>
            <person name="Lima L.F.A."/>
            <person name="Loureiro M.F."/>
            <person name="Lyra M.C.C.P."/>
            <person name="Madeira H.M.F."/>
            <person name="Manfio G.P."/>
            <person name="Maranhao A.Q."/>
            <person name="Martins W.S."/>
            <person name="di Mauro S.M.Z."/>
            <person name="de Medeiros S.R.B."/>
            <person name="Meissner R.V."/>
            <person name="Moreira M.A.M."/>
            <person name="Nascimento F.F."/>
            <person name="Nicolas M.F."/>
            <person name="Oliveira J.G."/>
            <person name="Oliveira S.C."/>
            <person name="Paixao R.F.C."/>
            <person name="Parente J.A."/>
            <person name="Pedrosa F.O."/>
            <person name="Pena S.D.J."/>
            <person name="Pereira J.O."/>
            <person name="Pereira M."/>
            <person name="Pinto L.S.R.C."/>
            <person name="Pinto L.S."/>
            <person name="Porto J.I.R."/>
            <person name="Potrich D.P."/>
            <person name="Ramalho-Neto C.E."/>
            <person name="Reis A.M.M."/>
            <person name="Rigo L.U."/>
            <person name="Rondinelli E."/>
            <person name="Santos E.B.P."/>
            <person name="Santos F.R."/>
            <person name="Schneider M.P.C."/>
            <person name="Seuanez H.N."/>
            <person name="Silva A.M.R."/>
            <person name="da Silva A.L.C."/>
            <person name="Silva D.W."/>
            <person name="Silva R."/>
            <person name="Simoes I.C."/>
            <person name="Simon D."/>
            <person name="Soares C.M.A."/>
            <person name="Soares R.B.A."/>
            <person name="Souza E.M."/>
            <person name="Souza K.R.L."/>
            <person name="Souza R.C."/>
            <person name="Steffens M.B.R."/>
            <person name="Steindel M."/>
            <person name="Teixeira S.R."/>
            <person name="Urmenyi T."/>
            <person name="Vettore A."/>
            <person name="Wassem R."/>
            <person name="Zaha A."/>
            <person name="Simpson A.J.G."/>
        </authorList>
    </citation>
    <scope>NUCLEOTIDE SEQUENCE [LARGE SCALE GENOMIC DNA]</scope>
    <source>
        <strain>ATCC 12472 / DSM 30191 / JCM 1249 / CCUG 213 / NBRC 12614 / NCIMB 9131 / NCTC 9757 / MK</strain>
    </source>
</reference>
<comment type="function">
    <text evidence="1">Catalyzes the reversible interconversion of serine and glycine with tetrahydrofolate (THF) serving as the one-carbon carrier. This reaction serves as the major source of one-carbon groups required for the biosynthesis of purines, thymidylate, methionine, and other important biomolecules. Also exhibits THF-independent aldolase activity toward beta-hydroxyamino acids, producing glycine and aldehydes, via a retro-aldol mechanism.</text>
</comment>
<comment type="catalytic activity">
    <reaction evidence="1">
        <text>(6R)-5,10-methylene-5,6,7,8-tetrahydrofolate + glycine + H2O = (6S)-5,6,7,8-tetrahydrofolate + L-serine</text>
        <dbReference type="Rhea" id="RHEA:15481"/>
        <dbReference type="ChEBI" id="CHEBI:15377"/>
        <dbReference type="ChEBI" id="CHEBI:15636"/>
        <dbReference type="ChEBI" id="CHEBI:33384"/>
        <dbReference type="ChEBI" id="CHEBI:57305"/>
        <dbReference type="ChEBI" id="CHEBI:57453"/>
        <dbReference type="EC" id="2.1.2.1"/>
    </reaction>
</comment>
<comment type="cofactor">
    <cofactor evidence="1">
        <name>pyridoxal 5'-phosphate</name>
        <dbReference type="ChEBI" id="CHEBI:597326"/>
    </cofactor>
</comment>
<comment type="pathway">
    <text evidence="1">One-carbon metabolism; tetrahydrofolate interconversion.</text>
</comment>
<comment type="pathway">
    <text evidence="1">Amino-acid biosynthesis; glycine biosynthesis; glycine from L-serine: step 1/1.</text>
</comment>
<comment type="subunit">
    <text evidence="1">Homodimer.</text>
</comment>
<comment type="subcellular location">
    <subcellularLocation>
        <location evidence="1">Cytoplasm</location>
    </subcellularLocation>
</comment>
<comment type="similarity">
    <text evidence="1">Belongs to the SHMT family.</text>
</comment>
<protein>
    <recommendedName>
        <fullName evidence="1">Serine hydroxymethyltransferase</fullName>
        <shortName evidence="1">SHMT</shortName>
        <shortName evidence="1">Serine methylase</shortName>
        <ecNumber evidence="1">2.1.2.1</ecNumber>
    </recommendedName>
</protein>
<dbReference type="EC" id="2.1.2.1" evidence="1"/>
<dbReference type="EMBL" id="AE016825">
    <property type="protein sequence ID" value="AAQ58961.1"/>
    <property type="molecule type" value="Genomic_DNA"/>
</dbReference>
<dbReference type="RefSeq" id="WP_011134840.1">
    <property type="nucleotide sequence ID" value="NC_005085.1"/>
</dbReference>
<dbReference type="SMR" id="Q7NYI8"/>
<dbReference type="STRING" id="243365.CV_1286"/>
<dbReference type="GeneID" id="66366947"/>
<dbReference type="KEGG" id="cvi:CV_1286"/>
<dbReference type="eggNOG" id="COG0112">
    <property type="taxonomic scope" value="Bacteria"/>
</dbReference>
<dbReference type="HOGENOM" id="CLU_022477_2_1_4"/>
<dbReference type="OrthoDB" id="9803846at2"/>
<dbReference type="UniPathway" id="UPA00193"/>
<dbReference type="UniPathway" id="UPA00288">
    <property type="reaction ID" value="UER01023"/>
</dbReference>
<dbReference type="Proteomes" id="UP000001424">
    <property type="component" value="Chromosome"/>
</dbReference>
<dbReference type="GO" id="GO:0005829">
    <property type="term" value="C:cytosol"/>
    <property type="evidence" value="ECO:0007669"/>
    <property type="project" value="TreeGrafter"/>
</dbReference>
<dbReference type="GO" id="GO:0004372">
    <property type="term" value="F:glycine hydroxymethyltransferase activity"/>
    <property type="evidence" value="ECO:0007669"/>
    <property type="project" value="UniProtKB-UniRule"/>
</dbReference>
<dbReference type="GO" id="GO:0030170">
    <property type="term" value="F:pyridoxal phosphate binding"/>
    <property type="evidence" value="ECO:0007669"/>
    <property type="project" value="UniProtKB-UniRule"/>
</dbReference>
<dbReference type="GO" id="GO:0019264">
    <property type="term" value="P:glycine biosynthetic process from serine"/>
    <property type="evidence" value="ECO:0007669"/>
    <property type="project" value="UniProtKB-UniRule"/>
</dbReference>
<dbReference type="GO" id="GO:0035999">
    <property type="term" value="P:tetrahydrofolate interconversion"/>
    <property type="evidence" value="ECO:0007669"/>
    <property type="project" value="UniProtKB-UniRule"/>
</dbReference>
<dbReference type="CDD" id="cd00378">
    <property type="entry name" value="SHMT"/>
    <property type="match status" value="1"/>
</dbReference>
<dbReference type="FunFam" id="3.40.640.10:FF:000001">
    <property type="entry name" value="Serine hydroxymethyltransferase"/>
    <property type="match status" value="1"/>
</dbReference>
<dbReference type="FunFam" id="3.90.1150.10:FF:000003">
    <property type="entry name" value="Serine hydroxymethyltransferase"/>
    <property type="match status" value="1"/>
</dbReference>
<dbReference type="Gene3D" id="3.90.1150.10">
    <property type="entry name" value="Aspartate Aminotransferase, domain 1"/>
    <property type="match status" value="1"/>
</dbReference>
<dbReference type="Gene3D" id="3.40.640.10">
    <property type="entry name" value="Type I PLP-dependent aspartate aminotransferase-like (Major domain)"/>
    <property type="match status" value="1"/>
</dbReference>
<dbReference type="HAMAP" id="MF_00051">
    <property type="entry name" value="SHMT"/>
    <property type="match status" value="1"/>
</dbReference>
<dbReference type="InterPro" id="IPR015424">
    <property type="entry name" value="PyrdxlP-dep_Trfase"/>
</dbReference>
<dbReference type="InterPro" id="IPR015421">
    <property type="entry name" value="PyrdxlP-dep_Trfase_major"/>
</dbReference>
<dbReference type="InterPro" id="IPR015422">
    <property type="entry name" value="PyrdxlP-dep_Trfase_small"/>
</dbReference>
<dbReference type="InterPro" id="IPR001085">
    <property type="entry name" value="Ser_HO-MeTrfase"/>
</dbReference>
<dbReference type="InterPro" id="IPR049943">
    <property type="entry name" value="Ser_HO-MeTrfase-like"/>
</dbReference>
<dbReference type="InterPro" id="IPR019798">
    <property type="entry name" value="Ser_HO-MeTrfase_PLP_BS"/>
</dbReference>
<dbReference type="InterPro" id="IPR039429">
    <property type="entry name" value="SHMT-like_dom"/>
</dbReference>
<dbReference type="NCBIfam" id="NF000586">
    <property type="entry name" value="PRK00011.1"/>
    <property type="match status" value="1"/>
</dbReference>
<dbReference type="PANTHER" id="PTHR11680">
    <property type="entry name" value="SERINE HYDROXYMETHYLTRANSFERASE"/>
    <property type="match status" value="1"/>
</dbReference>
<dbReference type="PANTHER" id="PTHR11680:SF50">
    <property type="entry name" value="SERINE HYDROXYMETHYLTRANSFERASE"/>
    <property type="match status" value="1"/>
</dbReference>
<dbReference type="Pfam" id="PF00464">
    <property type="entry name" value="SHMT"/>
    <property type="match status" value="1"/>
</dbReference>
<dbReference type="PIRSF" id="PIRSF000412">
    <property type="entry name" value="SHMT"/>
    <property type="match status" value="1"/>
</dbReference>
<dbReference type="SUPFAM" id="SSF53383">
    <property type="entry name" value="PLP-dependent transferases"/>
    <property type="match status" value="1"/>
</dbReference>
<dbReference type="PROSITE" id="PS00096">
    <property type="entry name" value="SHMT"/>
    <property type="match status" value="1"/>
</dbReference>
<accession>Q7NYI8</accession>
<proteinExistence type="inferred from homology"/>
<organism>
    <name type="scientific">Chromobacterium violaceum (strain ATCC 12472 / DSM 30191 / JCM 1249 / CCUG 213 / NBRC 12614 / NCIMB 9131 / NCTC 9757 / MK)</name>
    <dbReference type="NCBI Taxonomy" id="243365"/>
    <lineage>
        <taxon>Bacteria</taxon>
        <taxon>Pseudomonadati</taxon>
        <taxon>Pseudomonadota</taxon>
        <taxon>Betaproteobacteria</taxon>
        <taxon>Neisseriales</taxon>
        <taxon>Chromobacteriaceae</taxon>
        <taxon>Chromobacterium</taxon>
    </lineage>
</organism>
<sequence>MFAADQTIAKFDPELAAAIAAECQRQEDHIELIASENYTSPAVMEAQGSQLTNKYAEGYPGKRFYGGCEHVDVVEQLAIDRVKQLFGAEYANVQPHSGSQANQAVYFSILKPGDTVMGMNLGHGGHLTHGSPANLSGKMFNIVAYGLNDKEEIDYDDMERVAMETKPKLIIGGASAYALRFDFERMGQIAKKVGAYFMVDMAHYAGLVAAGLYPNPVPHADFVTSTTHKTLRGPRGGIILAKAEFEKSINSNVFPTLQGGPLEHVIAAKAVAFKEALQPAFKEYQQQVLKNAAIMAKTLAERGLRIVSGRTESHVFLVDLRAKGLTGKQADALLGRAHITVNKNAIPNDPETPFVTSGIRIGSPAITTRGFKEAEAIEVANMVADVLDNPNDDALIARIAEKATALCHRFPVYAK</sequence>
<gene>
    <name evidence="1" type="primary">glyA</name>
    <name type="ordered locus">CV_1286</name>
</gene>
<evidence type="ECO:0000255" key="1">
    <source>
        <dbReference type="HAMAP-Rule" id="MF_00051"/>
    </source>
</evidence>
<name>GLYA_CHRVO</name>